<gene>
    <name type="primary">atg6A</name>
    <name type="synonym">apg6</name>
    <name type="synonym">apg6A</name>
    <name type="synonym">atg6</name>
    <name type="ORF">DDB_G0269244</name>
</gene>
<accession>Q55CC5</accession>
<accession>Q86CS0</accession>
<dbReference type="EMBL" id="AY191013">
    <property type="protein sequence ID" value="AAO39076.1"/>
    <property type="molecule type" value="Genomic_DNA"/>
</dbReference>
<dbReference type="EMBL" id="AAFI02000005">
    <property type="protein sequence ID" value="EAL71972.1"/>
    <property type="molecule type" value="Genomic_DNA"/>
</dbReference>
<dbReference type="RefSeq" id="XP_646556.1">
    <property type="nucleotide sequence ID" value="XM_641464.1"/>
</dbReference>
<dbReference type="SMR" id="Q55CC5"/>
<dbReference type="FunCoup" id="Q55CC5">
    <property type="interactions" value="381"/>
</dbReference>
<dbReference type="STRING" id="44689.Q55CC5"/>
<dbReference type="GlyGen" id="Q55CC5">
    <property type="glycosylation" value="1 site"/>
</dbReference>
<dbReference type="PaxDb" id="44689-DDB0191425"/>
<dbReference type="EnsemblProtists" id="EAL71972">
    <property type="protein sequence ID" value="EAL71972"/>
    <property type="gene ID" value="DDB_G0269244"/>
</dbReference>
<dbReference type="GeneID" id="8617524"/>
<dbReference type="KEGG" id="ddi:DDB_G0269244"/>
<dbReference type="dictyBase" id="DDB_G0269244">
    <property type="gene designation" value="atg6A"/>
</dbReference>
<dbReference type="VEuPathDB" id="AmoebaDB:DDB_G0269244"/>
<dbReference type="eggNOG" id="KOG2751">
    <property type="taxonomic scope" value="Eukaryota"/>
</dbReference>
<dbReference type="HOGENOM" id="CLU_256528_0_0_1"/>
<dbReference type="InParanoid" id="Q55CC5"/>
<dbReference type="OMA" id="KLIPMGN"/>
<dbReference type="PRO" id="PR:Q55CC5"/>
<dbReference type="Proteomes" id="UP000002195">
    <property type="component" value="Chromosome 1"/>
</dbReference>
<dbReference type="GO" id="GO:0010008">
    <property type="term" value="C:endosome membrane"/>
    <property type="evidence" value="ECO:0007669"/>
    <property type="project" value="UniProtKB-SubCell"/>
</dbReference>
<dbReference type="GO" id="GO:0000407">
    <property type="term" value="C:phagophore assembly site"/>
    <property type="evidence" value="ECO:0000318"/>
    <property type="project" value="GO_Central"/>
</dbReference>
<dbReference type="GO" id="GO:0034271">
    <property type="term" value="C:phosphatidylinositol 3-kinase complex, class III, type I"/>
    <property type="evidence" value="ECO:0000318"/>
    <property type="project" value="GO_Central"/>
</dbReference>
<dbReference type="GO" id="GO:0034272">
    <property type="term" value="C:phosphatidylinositol 3-kinase complex, class III, type II"/>
    <property type="evidence" value="ECO:0000318"/>
    <property type="project" value="GO_Central"/>
</dbReference>
<dbReference type="GO" id="GO:0043548">
    <property type="term" value="F:phosphatidylinositol 3-kinase binding"/>
    <property type="evidence" value="ECO:0000318"/>
    <property type="project" value="GO_Central"/>
</dbReference>
<dbReference type="GO" id="GO:0030674">
    <property type="term" value="F:protein-macromolecule adaptor activity"/>
    <property type="evidence" value="ECO:0000318"/>
    <property type="project" value="GO_Central"/>
</dbReference>
<dbReference type="GO" id="GO:0000045">
    <property type="term" value="P:autophagosome assembly"/>
    <property type="evidence" value="ECO:0000318"/>
    <property type="project" value="GO_Central"/>
</dbReference>
<dbReference type="GO" id="GO:0006995">
    <property type="term" value="P:cellular response to nitrogen starvation"/>
    <property type="evidence" value="ECO:0000315"/>
    <property type="project" value="dictyBase"/>
</dbReference>
<dbReference type="GO" id="GO:0045324">
    <property type="term" value="P:late endosome to vacuole transport"/>
    <property type="evidence" value="ECO:0000318"/>
    <property type="project" value="GO_Central"/>
</dbReference>
<dbReference type="GO" id="GO:0016236">
    <property type="term" value="P:macroautophagy"/>
    <property type="evidence" value="ECO:0000315"/>
    <property type="project" value="dictyBase"/>
</dbReference>
<dbReference type="GO" id="GO:0000423">
    <property type="term" value="P:mitophagy"/>
    <property type="evidence" value="ECO:0000318"/>
    <property type="project" value="GO_Central"/>
</dbReference>
<dbReference type="GO" id="GO:0015031">
    <property type="term" value="P:protein transport"/>
    <property type="evidence" value="ECO:0007669"/>
    <property type="project" value="UniProtKB-KW"/>
</dbReference>
<dbReference type="GO" id="GO:0001878">
    <property type="term" value="P:response to yeast"/>
    <property type="evidence" value="ECO:0000315"/>
    <property type="project" value="dictyBase"/>
</dbReference>
<dbReference type="GO" id="GO:0030587">
    <property type="term" value="P:sorocarp development"/>
    <property type="evidence" value="ECO:0000315"/>
    <property type="project" value="dictyBase"/>
</dbReference>
<dbReference type="GO" id="GO:0031288">
    <property type="term" value="P:sorocarp morphogenesis"/>
    <property type="evidence" value="ECO:0000315"/>
    <property type="project" value="dictyBase"/>
</dbReference>
<dbReference type="GO" id="GO:0030435">
    <property type="term" value="P:sporulation resulting in formation of a cellular spore"/>
    <property type="evidence" value="ECO:0000315"/>
    <property type="project" value="dictyBase"/>
</dbReference>
<dbReference type="FunFam" id="1.10.418.40:FF:000013">
    <property type="entry name" value="Beclin-1-like protein A"/>
    <property type="match status" value="1"/>
</dbReference>
<dbReference type="Gene3D" id="1.10.418.40">
    <property type="entry name" value="Autophagy protein 6/Beclin 1"/>
    <property type="match status" value="1"/>
</dbReference>
<dbReference type="InterPro" id="IPR007243">
    <property type="entry name" value="Atg6/Beclin"/>
</dbReference>
<dbReference type="InterPro" id="IPR038274">
    <property type="entry name" value="Atg6/Beclin_C_sf"/>
</dbReference>
<dbReference type="InterPro" id="IPR040455">
    <property type="entry name" value="Atg6_BARA"/>
</dbReference>
<dbReference type="PANTHER" id="PTHR12768">
    <property type="entry name" value="BECLIN 1"/>
    <property type="match status" value="1"/>
</dbReference>
<dbReference type="PANTHER" id="PTHR12768:SF7">
    <property type="entry name" value="BECLIN-1-LIKE PROTEIN A"/>
    <property type="match status" value="1"/>
</dbReference>
<dbReference type="Pfam" id="PF04111">
    <property type="entry name" value="APG6"/>
    <property type="match status" value="1"/>
</dbReference>
<organism>
    <name type="scientific">Dictyostelium discoideum</name>
    <name type="common">Social amoeba</name>
    <dbReference type="NCBI Taxonomy" id="44689"/>
    <lineage>
        <taxon>Eukaryota</taxon>
        <taxon>Amoebozoa</taxon>
        <taxon>Evosea</taxon>
        <taxon>Eumycetozoa</taxon>
        <taxon>Dictyostelia</taxon>
        <taxon>Dictyosteliales</taxon>
        <taxon>Dictyosteliaceae</taxon>
        <taxon>Dictyostelium</taxon>
    </lineage>
</organism>
<comment type="function">
    <text evidence="2 5 6 7">Involved in autophagy (PubMed:12626495, PubMed:14736886). May be required to recruit the atg8-phosphatidylinositol conjugate and the atg12-atg5 conjugate to the pre-autophagosomal structure (By similarity). Required for normal survival when exposed to pathogenic bacteria S.typhimurium by promoting autophagic degradation of intracellular S.typhimurium (PubMed:19667176).</text>
</comment>
<comment type="subcellular location">
    <subcellularLocation>
        <location evidence="1">Endosome membrane</location>
        <topology evidence="1">Peripheral membrane protein</topology>
    </subcellularLocation>
</comment>
<comment type="disruption phenotype">
    <text evidence="7">Impaired survival when exposed to pathogenic bacteria S.typhimurium associated with the accumulation of S.typhimuriumin in large vacuoles which fail to undergo autophagy.</text>
</comment>
<comment type="similarity">
    <text evidence="8">Belongs to the beclin family.</text>
</comment>
<feature type="chain" id="PRO_0000327429" description="Beclin-1-like protein A">
    <location>
        <begin position="1"/>
        <end position="1368"/>
    </location>
</feature>
<feature type="region of interest" description="Disordered" evidence="4">
    <location>
        <begin position="24"/>
        <end position="64"/>
    </location>
</feature>
<feature type="region of interest" description="Disordered" evidence="4">
    <location>
        <begin position="122"/>
        <end position="249"/>
    </location>
</feature>
<feature type="region of interest" description="Disordered" evidence="4">
    <location>
        <begin position="331"/>
        <end position="431"/>
    </location>
</feature>
<feature type="region of interest" description="Disordered" evidence="4">
    <location>
        <begin position="819"/>
        <end position="874"/>
    </location>
</feature>
<feature type="region of interest" description="Disordered" evidence="4">
    <location>
        <begin position="992"/>
        <end position="1048"/>
    </location>
</feature>
<feature type="coiled-coil region" evidence="3">
    <location>
        <begin position="1047"/>
        <end position="1150"/>
    </location>
</feature>
<feature type="compositionally biased region" description="Low complexity" evidence="4">
    <location>
        <begin position="24"/>
        <end position="57"/>
    </location>
</feature>
<feature type="compositionally biased region" description="Low complexity" evidence="4">
    <location>
        <begin position="122"/>
        <end position="135"/>
    </location>
</feature>
<feature type="compositionally biased region" description="Polar residues" evidence="4">
    <location>
        <begin position="136"/>
        <end position="147"/>
    </location>
</feature>
<feature type="compositionally biased region" description="Low complexity" evidence="4">
    <location>
        <begin position="148"/>
        <end position="167"/>
    </location>
</feature>
<feature type="compositionally biased region" description="Polar residues" evidence="4">
    <location>
        <begin position="168"/>
        <end position="177"/>
    </location>
</feature>
<feature type="compositionally biased region" description="Low complexity" evidence="4">
    <location>
        <begin position="179"/>
        <end position="246"/>
    </location>
</feature>
<feature type="compositionally biased region" description="Low complexity" evidence="4">
    <location>
        <begin position="992"/>
        <end position="1005"/>
    </location>
</feature>
<feature type="compositionally biased region" description="Low complexity" evidence="4">
    <location>
        <begin position="1015"/>
        <end position="1048"/>
    </location>
</feature>
<feature type="sequence conflict" description="In Ref. 1; AAO39076." evidence="8" ref="1">
    <original>L</original>
    <variation>F</variation>
    <location>
        <position position="1359"/>
    </location>
</feature>
<keyword id="KW-0072">Autophagy</keyword>
<keyword id="KW-0175">Coiled coil</keyword>
<keyword id="KW-0967">Endosome</keyword>
<keyword id="KW-0472">Membrane</keyword>
<keyword id="KW-0653">Protein transport</keyword>
<keyword id="KW-1185">Reference proteome</keyword>
<keyword id="KW-0813">Transport</keyword>
<name>BECNA_DICDI</name>
<reference key="1">
    <citation type="journal article" date="2003" name="J. Biol. Chem.">
        <title>Macroautophagy is required for multicellular development of the social amoeba Dictyostelium discoideum.</title>
        <authorList>
            <person name="Otto G.P."/>
            <person name="Wu M.Y."/>
            <person name="Kazgan N."/>
            <person name="Anderson O.R."/>
            <person name="Kessin R.H."/>
        </authorList>
    </citation>
    <scope>NUCLEOTIDE SEQUENCE [GENOMIC DNA]</scope>
    <scope>FUNCTION</scope>
    <source>
        <strain>AX3 / DH1</strain>
    </source>
</reference>
<reference key="2">
    <citation type="journal article" date="2005" name="Nature">
        <title>The genome of the social amoeba Dictyostelium discoideum.</title>
        <authorList>
            <person name="Eichinger L."/>
            <person name="Pachebat J.A."/>
            <person name="Gloeckner G."/>
            <person name="Rajandream M.A."/>
            <person name="Sucgang R."/>
            <person name="Berriman M."/>
            <person name="Song J."/>
            <person name="Olsen R."/>
            <person name="Szafranski K."/>
            <person name="Xu Q."/>
            <person name="Tunggal B."/>
            <person name="Kummerfeld S."/>
            <person name="Madera M."/>
            <person name="Konfortov B.A."/>
            <person name="Rivero F."/>
            <person name="Bankier A.T."/>
            <person name="Lehmann R."/>
            <person name="Hamlin N."/>
            <person name="Davies R."/>
            <person name="Gaudet P."/>
            <person name="Fey P."/>
            <person name="Pilcher K."/>
            <person name="Chen G."/>
            <person name="Saunders D."/>
            <person name="Sodergren E.J."/>
            <person name="Davis P."/>
            <person name="Kerhornou A."/>
            <person name="Nie X."/>
            <person name="Hall N."/>
            <person name="Anjard C."/>
            <person name="Hemphill L."/>
            <person name="Bason N."/>
            <person name="Farbrother P."/>
            <person name="Desany B."/>
            <person name="Just E."/>
            <person name="Morio T."/>
            <person name="Rost R."/>
            <person name="Churcher C.M."/>
            <person name="Cooper J."/>
            <person name="Haydock S."/>
            <person name="van Driessche N."/>
            <person name="Cronin A."/>
            <person name="Goodhead I."/>
            <person name="Muzny D.M."/>
            <person name="Mourier T."/>
            <person name="Pain A."/>
            <person name="Lu M."/>
            <person name="Harper D."/>
            <person name="Lindsay R."/>
            <person name="Hauser H."/>
            <person name="James K.D."/>
            <person name="Quiles M."/>
            <person name="Madan Babu M."/>
            <person name="Saito T."/>
            <person name="Buchrieser C."/>
            <person name="Wardroper A."/>
            <person name="Felder M."/>
            <person name="Thangavelu M."/>
            <person name="Johnson D."/>
            <person name="Knights A."/>
            <person name="Loulseged H."/>
            <person name="Mungall K.L."/>
            <person name="Oliver K."/>
            <person name="Price C."/>
            <person name="Quail M.A."/>
            <person name="Urushihara H."/>
            <person name="Hernandez J."/>
            <person name="Rabbinowitsch E."/>
            <person name="Steffen D."/>
            <person name="Sanders M."/>
            <person name="Ma J."/>
            <person name="Kohara Y."/>
            <person name="Sharp S."/>
            <person name="Simmonds M.N."/>
            <person name="Spiegler S."/>
            <person name="Tivey A."/>
            <person name="Sugano S."/>
            <person name="White B."/>
            <person name="Walker D."/>
            <person name="Woodward J.R."/>
            <person name="Winckler T."/>
            <person name="Tanaka Y."/>
            <person name="Shaulsky G."/>
            <person name="Schleicher M."/>
            <person name="Weinstock G.M."/>
            <person name="Rosenthal A."/>
            <person name="Cox E.C."/>
            <person name="Chisholm R.L."/>
            <person name="Gibbs R.A."/>
            <person name="Loomis W.F."/>
            <person name="Platzer M."/>
            <person name="Kay R.R."/>
            <person name="Williams J.G."/>
            <person name="Dear P.H."/>
            <person name="Noegel A.A."/>
            <person name="Barrell B.G."/>
            <person name="Kuspa A."/>
        </authorList>
    </citation>
    <scope>NUCLEOTIDE SEQUENCE [LARGE SCALE GENOMIC DNA]</scope>
    <source>
        <strain>AX4</strain>
    </source>
</reference>
<reference key="3">
    <citation type="journal article" date="2004" name="J. Biol. Chem.">
        <title>Dictyostelium macroautophagy mutants vary in the severity of their developmental defects.</title>
        <authorList>
            <person name="Otto G.P."/>
            <person name="Wu M.Y."/>
            <person name="Kazgan N."/>
            <person name="Anderson O.R."/>
            <person name="Kessin R.H."/>
        </authorList>
    </citation>
    <scope>FUNCTION</scope>
</reference>
<reference key="4">
    <citation type="journal article" date="2009" name="Proc. Natl. Acad. Sci. U.S.A.">
        <title>Autophagy genes protect against Salmonella typhimurium infection and mediate insulin signaling-regulated pathogen resistance.</title>
        <authorList>
            <person name="Jia K."/>
            <person name="Thomas C."/>
            <person name="Akbar M."/>
            <person name="Sun Q."/>
            <person name="Adams-Huet B."/>
            <person name="Gilpin C."/>
            <person name="Levine B."/>
        </authorList>
    </citation>
    <scope>FUNCTION</scope>
    <scope>DISRUPTION PHENOTYPE</scope>
</reference>
<proteinExistence type="inferred from homology"/>
<protein>
    <recommendedName>
        <fullName>Beclin-1-like protein A</fullName>
    </recommendedName>
    <alternativeName>
        <fullName>Autophagy-related protein 6A</fullName>
    </alternativeName>
</protein>
<evidence type="ECO:0000250" key="1"/>
<evidence type="ECO:0000250" key="2">
    <source>
        <dbReference type="UniProtKB" id="Q02948"/>
    </source>
</evidence>
<evidence type="ECO:0000255" key="3"/>
<evidence type="ECO:0000256" key="4">
    <source>
        <dbReference type="SAM" id="MobiDB-lite"/>
    </source>
</evidence>
<evidence type="ECO:0000269" key="5">
    <source>
    </source>
</evidence>
<evidence type="ECO:0000269" key="6">
    <source>
    </source>
</evidence>
<evidence type="ECO:0000269" key="7">
    <source>
    </source>
</evidence>
<evidence type="ECO:0000305" key="8"/>
<sequence length="1368" mass="155666">MKKSDSSSSLVFSGIQIEINNNYGSGSGSNNNNNNNNNNNNINNNNNPNNNPNNNGPPLRPSSEWVLLSSSQPTIATTTNLTTNAPLSDSMIMNYVGNDNLNTPITPSTSSPYLKRNNSNLNSIIENSNNSSPSNAITRNNSFNMDPNNNNNNNNNNNNNNNNNNNNGEYMNSSIVFDNNVNNNNNNPNNNPNNNVHSNSHNTNNSITHSGSITSSNSNNNNSNNNNNNNSNNNNNINNSVNSVNSLMMNSDKNCNHQFPSDDVLISNEHDIIDLALNKEFLNQYRIQTNSIFINSQHVINQDVQSYQDYESLLSSYNTILNQLLLITSSNKNNNNNNNPNNNNNNVTSPNSLLSPPSTSQLQQQQQQQQQSPSPPLNNNNNNNNNNNNNNNNNNNNNNNNNNNNNNNNYYLMSTSTMSSTTTNLSTSTNSNINTNIPTNYNMSTSITATTTTTTATNTIAIGTTTTAAITTAATNSTNSNNLNLSSTNLGLDNNFLYQRILPEILSLLEKLTVFSRNNDTEIFNRLGNNVKLIFDHLNLIKNDILEANFSHLSGIFTIYNHTIISSDKTTKQFVFRFLHSLAPMTVPPAIVVTPELKKVVQKIHFSKPTFTPLCIEWKEICKYIDVLKSVSLFIAQVGQYCFLNQSIIINDELLFIPSIYVLFDNIQNLSMKEERFHIEYILHNLKFIVSKIPKQTREFTKTEIERLYSYIRGNPSYVKEILPKLLKNIYIDPYFYHLWNNHCIHLLNNNINNNNNNNTNNSSNNSNNNNNTNINIGKDIGNDLTLLLVSNKNSFLLSFDERHFSIFYSSISNSTTTTITPTITSPNNNSNRINNNNNNNNNNNNNNNNNNNINVNNNVNNNNVNNNNNNNNNNSNQYIVNYFDNTTSLLNFIESNQFKYIILSNKEVETIKFFKSVLPVTLPLPQPSSRQAILQQQQQQNYKPRILCGPCLSRFKTILDEFDNEESIENQIYSNYLNNINNNENIDPNLIDGNENKINGNDNNNNHDDDEKTNNNNNNNNNNNNNNNNNIYNNNNIEDYNNNNDNNYNFENEINDKENEFRELEKEINEIEKEEQELIKEYLELENRNQINLDIKQKLEDILKEIKLEEKTHYDLVNNYYQEYFDLKQEDEIYTNQINAIRDQLERVSQIDINKITFKIELPNTGVNGGIVGYNESSNTTISSINGFRLGTLSNLKVDWEEINSAWGETSLLLYVLASQLEFNFQNYKLIPMSSKSIIQSKNDKMSYTLYGGDNIQFSRSFLWFGASDQRFDSGMEAFLSCVNDIATFVQSKKPSINFNYRISKDKIGDSNRLLSIKIAGNSELNWTMALRFMLSNLKKILDNLDSIVESKQKQQQLQRQQSLNNL</sequence>